<dbReference type="EC" id="3.5.1.88" evidence="1"/>
<dbReference type="EMBL" id="AL766854">
    <property type="protein sequence ID" value="CAD47542.1"/>
    <property type="molecule type" value="Genomic_DNA"/>
</dbReference>
<dbReference type="RefSeq" id="WP_001272875.1">
    <property type="nucleotide sequence ID" value="NC_004368.1"/>
</dbReference>
<dbReference type="PDB" id="5JEX">
    <property type="method" value="X-ray"/>
    <property type="resolution" value="2.00 A"/>
    <property type="chains" value="A=1-204"/>
</dbReference>
<dbReference type="PDB" id="5JEY">
    <property type="method" value="X-ray"/>
    <property type="resolution" value="2.80 A"/>
    <property type="chains" value="A=1-204"/>
</dbReference>
<dbReference type="PDB" id="5JEZ">
    <property type="method" value="X-ray"/>
    <property type="resolution" value="1.70 A"/>
    <property type="chains" value="A=1-204"/>
</dbReference>
<dbReference type="PDB" id="5JF0">
    <property type="method" value="X-ray"/>
    <property type="resolution" value="1.60 A"/>
    <property type="chains" value="A=1-204"/>
</dbReference>
<dbReference type="PDB" id="5JF1">
    <property type="method" value="X-ray"/>
    <property type="resolution" value="2.00 A"/>
    <property type="chains" value="A=1-204"/>
</dbReference>
<dbReference type="PDB" id="5JF2">
    <property type="method" value="X-ray"/>
    <property type="resolution" value="2.00 A"/>
    <property type="chains" value="A=1-204"/>
</dbReference>
<dbReference type="PDB" id="5JF3">
    <property type="method" value="X-ray"/>
    <property type="resolution" value="1.60 A"/>
    <property type="chains" value="A=1-204"/>
</dbReference>
<dbReference type="PDB" id="5JF4">
    <property type="method" value="X-ray"/>
    <property type="resolution" value="2.40 A"/>
    <property type="chains" value="A=1-204"/>
</dbReference>
<dbReference type="PDB" id="5JF5">
    <property type="method" value="X-ray"/>
    <property type="resolution" value="1.80 A"/>
    <property type="chains" value="A=1-204"/>
</dbReference>
<dbReference type="PDB" id="5JF6">
    <property type="method" value="X-ray"/>
    <property type="resolution" value="1.70 A"/>
    <property type="chains" value="A=1-204"/>
</dbReference>
<dbReference type="PDB" id="5JF7">
    <property type="method" value="X-ray"/>
    <property type="resolution" value="2.10 A"/>
    <property type="chains" value="A=1-204"/>
</dbReference>
<dbReference type="PDB" id="5JF8">
    <property type="method" value="X-ray"/>
    <property type="resolution" value="1.80 A"/>
    <property type="chains" value="A=1-204"/>
</dbReference>
<dbReference type="PDBsum" id="5JEX"/>
<dbReference type="PDBsum" id="5JEY"/>
<dbReference type="PDBsum" id="5JEZ"/>
<dbReference type="PDBsum" id="5JF0"/>
<dbReference type="PDBsum" id="5JF1"/>
<dbReference type="PDBsum" id="5JF2"/>
<dbReference type="PDBsum" id="5JF3"/>
<dbReference type="PDBsum" id="5JF4"/>
<dbReference type="PDBsum" id="5JF5"/>
<dbReference type="PDBsum" id="5JF6"/>
<dbReference type="PDBsum" id="5JF7"/>
<dbReference type="PDBsum" id="5JF8"/>
<dbReference type="SMR" id="Q8E378"/>
<dbReference type="GeneID" id="66886680"/>
<dbReference type="KEGG" id="san:gbs1883"/>
<dbReference type="eggNOG" id="COG0242">
    <property type="taxonomic scope" value="Bacteria"/>
</dbReference>
<dbReference type="HOGENOM" id="CLU_061901_4_0_9"/>
<dbReference type="BRENDA" id="3.5.1.88">
    <property type="organism ID" value="5917"/>
</dbReference>
<dbReference type="Proteomes" id="UP000000823">
    <property type="component" value="Chromosome"/>
</dbReference>
<dbReference type="GO" id="GO:0046872">
    <property type="term" value="F:metal ion binding"/>
    <property type="evidence" value="ECO:0007669"/>
    <property type="project" value="UniProtKB-KW"/>
</dbReference>
<dbReference type="GO" id="GO:0042586">
    <property type="term" value="F:peptide deformylase activity"/>
    <property type="evidence" value="ECO:0007669"/>
    <property type="project" value="UniProtKB-UniRule"/>
</dbReference>
<dbReference type="GO" id="GO:0043686">
    <property type="term" value="P:co-translational protein modification"/>
    <property type="evidence" value="ECO:0007669"/>
    <property type="project" value="TreeGrafter"/>
</dbReference>
<dbReference type="GO" id="GO:0006412">
    <property type="term" value="P:translation"/>
    <property type="evidence" value="ECO:0007669"/>
    <property type="project" value="UniProtKB-UniRule"/>
</dbReference>
<dbReference type="CDD" id="cd00487">
    <property type="entry name" value="Pep_deformylase"/>
    <property type="match status" value="1"/>
</dbReference>
<dbReference type="FunFam" id="3.90.45.10:FF:000002">
    <property type="entry name" value="Peptide deformylase"/>
    <property type="match status" value="1"/>
</dbReference>
<dbReference type="Gene3D" id="3.90.45.10">
    <property type="entry name" value="Peptide deformylase"/>
    <property type="match status" value="1"/>
</dbReference>
<dbReference type="HAMAP" id="MF_00163">
    <property type="entry name" value="Pep_deformylase"/>
    <property type="match status" value="1"/>
</dbReference>
<dbReference type="InterPro" id="IPR023635">
    <property type="entry name" value="Peptide_deformylase"/>
</dbReference>
<dbReference type="InterPro" id="IPR036821">
    <property type="entry name" value="Peptide_deformylase_sf"/>
</dbReference>
<dbReference type="NCBIfam" id="TIGR00079">
    <property type="entry name" value="pept_deformyl"/>
    <property type="match status" value="1"/>
</dbReference>
<dbReference type="PANTHER" id="PTHR10458">
    <property type="entry name" value="PEPTIDE DEFORMYLASE"/>
    <property type="match status" value="1"/>
</dbReference>
<dbReference type="PANTHER" id="PTHR10458:SF8">
    <property type="entry name" value="PEPTIDE DEFORMYLASE 2"/>
    <property type="match status" value="1"/>
</dbReference>
<dbReference type="Pfam" id="PF01327">
    <property type="entry name" value="Pep_deformylase"/>
    <property type="match status" value="1"/>
</dbReference>
<dbReference type="PIRSF" id="PIRSF004749">
    <property type="entry name" value="Pep_def"/>
    <property type="match status" value="1"/>
</dbReference>
<dbReference type="PRINTS" id="PR01576">
    <property type="entry name" value="PDEFORMYLASE"/>
</dbReference>
<dbReference type="SUPFAM" id="SSF56420">
    <property type="entry name" value="Peptide deformylase"/>
    <property type="match status" value="1"/>
</dbReference>
<evidence type="ECO:0000255" key="1">
    <source>
        <dbReference type="HAMAP-Rule" id="MF_00163"/>
    </source>
</evidence>
<evidence type="ECO:0007829" key="2">
    <source>
        <dbReference type="PDB" id="5JF0"/>
    </source>
</evidence>
<name>DEF_STRA3</name>
<proteinExistence type="evidence at protein level"/>
<comment type="function">
    <text evidence="1">Removes the formyl group from the N-terminal Met of newly synthesized proteins. Requires at least a dipeptide for an efficient rate of reaction. N-terminal L-methionine is a prerequisite for activity but the enzyme has broad specificity at other positions.</text>
</comment>
<comment type="catalytic activity">
    <reaction evidence="1">
        <text>N-terminal N-formyl-L-methionyl-[peptide] + H2O = N-terminal L-methionyl-[peptide] + formate</text>
        <dbReference type="Rhea" id="RHEA:24420"/>
        <dbReference type="Rhea" id="RHEA-COMP:10639"/>
        <dbReference type="Rhea" id="RHEA-COMP:10640"/>
        <dbReference type="ChEBI" id="CHEBI:15377"/>
        <dbReference type="ChEBI" id="CHEBI:15740"/>
        <dbReference type="ChEBI" id="CHEBI:49298"/>
        <dbReference type="ChEBI" id="CHEBI:64731"/>
        <dbReference type="EC" id="3.5.1.88"/>
    </reaction>
</comment>
<comment type="cofactor">
    <cofactor evidence="1">
        <name>Fe(2+)</name>
        <dbReference type="ChEBI" id="CHEBI:29033"/>
    </cofactor>
    <text evidence="1">Binds 1 Fe(2+) ion.</text>
</comment>
<comment type="similarity">
    <text evidence="1">Belongs to the polypeptide deformylase family.</text>
</comment>
<organism>
    <name type="scientific">Streptococcus agalactiae serotype III (strain NEM316)</name>
    <dbReference type="NCBI Taxonomy" id="211110"/>
    <lineage>
        <taxon>Bacteria</taxon>
        <taxon>Bacillati</taxon>
        <taxon>Bacillota</taxon>
        <taxon>Bacilli</taxon>
        <taxon>Lactobacillales</taxon>
        <taxon>Streptococcaceae</taxon>
        <taxon>Streptococcus</taxon>
    </lineage>
</organism>
<feature type="chain" id="PRO_0000082847" description="Peptide deformylase">
    <location>
        <begin position="1"/>
        <end position="204"/>
    </location>
</feature>
<feature type="active site" evidence="1">
    <location>
        <position position="175"/>
    </location>
</feature>
<feature type="binding site" evidence="1">
    <location>
        <position position="131"/>
    </location>
    <ligand>
        <name>Fe cation</name>
        <dbReference type="ChEBI" id="CHEBI:24875"/>
    </ligand>
</feature>
<feature type="binding site" evidence="1">
    <location>
        <position position="174"/>
    </location>
    <ligand>
        <name>Fe cation</name>
        <dbReference type="ChEBI" id="CHEBI:24875"/>
    </ligand>
</feature>
<feature type="binding site" evidence="1">
    <location>
        <position position="178"/>
    </location>
    <ligand>
        <name>Fe cation</name>
        <dbReference type="ChEBI" id="CHEBI:24875"/>
    </ligand>
</feature>
<feature type="helix" evidence="2">
    <location>
        <begin position="3"/>
        <end position="8"/>
    </location>
</feature>
<feature type="helix" evidence="2">
    <location>
        <begin position="16"/>
        <end position="18"/>
    </location>
</feature>
<feature type="helix" evidence="2">
    <location>
        <begin position="25"/>
        <end position="28"/>
    </location>
</feature>
<feature type="helix" evidence="2">
    <location>
        <begin position="40"/>
        <end position="57"/>
    </location>
</feature>
<feature type="helix" evidence="2">
    <location>
        <begin position="59"/>
        <end position="65"/>
    </location>
</feature>
<feature type="strand" evidence="2">
    <location>
        <begin position="70"/>
        <end position="74"/>
    </location>
</feature>
<feature type="helix" evidence="2">
    <location>
        <begin position="75"/>
        <end position="78"/>
    </location>
</feature>
<feature type="strand" evidence="2">
    <location>
        <begin position="82"/>
        <end position="90"/>
    </location>
</feature>
<feature type="strand" evidence="2">
    <location>
        <begin position="101"/>
        <end position="118"/>
    </location>
</feature>
<feature type="strand" evidence="2">
    <location>
        <begin position="120"/>
        <end position="125"/>
    </location>
</feature>
<feature type="strand" evidence="2">
    <location>
        <begin position="144"/>
        <end position="153"/>
    </location>
</feature>
<feature type="strand" evidence="2">
    <location>
        <begin position="159"/>
        <end position="164"/>
    </location>
</feature>
<feature type="helix" evidence="2">
    <location>
        <begin position="166"/>
        <end position="179"/>
    </location>
</feature>
<feature type="helix" evidence="2">
    <location>
        <begin position="184"/>
        <end position="187"/>
    </location>
</feature>
<feature type="strand" evidence="2">
    <location>
        <begin position="201"/>
        <end position="203"/>
    </location>
</feature>
<sequence length="204" mass="22830">MSAIDKLVKASHLIDMNDIIREGNPTLRKVAEEVTFPLSEKEEILGEKMMQFLKHSQDPIMAEKLGLRGGVGLAAPQLDISKRIIAVLVPNVEDAQGNPPKEAYSLQEVMYNPKVVSHSVQDAALSDGEGCLSVDREVPGYVVRHARVTIEYFDKTGEKHRLKLKGYNSIVVQHEIDHIDGIMFYDRINEKNPFAVKEGLLILE</sequence>
<protein>
    <recommendedName>
        <fullName evidence="1">Peptide deformylase</fullName>
        <shortName evidence="1">PDF</shortName>
        <ecNumber evidence="1">3.5.1.88</ecNumber>
    </recommendedName>
    <alternativeName>
        <fullName evidence="1">Polypeptide deformylase</fullName>
    </alternativeName>
</protein>
<gene>
    <name evidence="1" type="primary">def</name>
    <name type="ordered locus">gbs1883</name>
</gene>
<reference key="1">
    <citation type="journal article" date="2002" name="Mol. Microbiol.">
        <title>Genome sequence of Streptococcus agalactiae, a pathogen causing invasive neonatal disease.</title>
        <authorList>
            <person name="Glaser P."/>
            <person name="Rusniok C."/>
            <person name="Buchrieser C."/>
            <person name="Chevalier F."/>
            <person name="Frangeul L."/>
            <person name="Msadek T."/>
            <person name="Zouine M."/>
            <person name="Couve E."/>
            <person name="Lalioui L."/>
            <person name="Poyart C."/>
            <person name="Trieu-Cuot P."/>
            <person name="Kunst F."/>
        </authorList>
    </citation>
    <scope>NUCLEOTIDE SEQUENCE [LARGE SCALE GENOMIC DNA]</scope>
    <source>
        <strain>NEM316</strain>
    </source>
</reference>
<accession>Q8E378</accession>
<keyword id="KW-0002">3D-structure</keyword>
<keyword id="KW-0378">Hydrolase</keyword>
<keyword id="KW-0408">Iron</keyword>
<keyword id="KW-0479">Metal-binding</keyword>
<keyword id="KW-0648">Protein biosynthesis</keyword>